<proteinExistence type="evidence at protein level"/>
<sequence>MAHEILIAETEAFLKNVAPETRTAIISAITGGKSACKSAAKLIKNEHLPLMSGEATTMHIVMRCLYPEIKPWKKASDMLNKATSSLKKSEGRDIRKQMKAAGDFLGVESMMKMRAFRDDQIMEMVEEVYDHPDDYTPDIRIGTITAWLRCKNKKSERYRSNVSESGRTALKIHEVRKASTAMNEIAGITGLGEEALSLQRQTESLAILCNHTFGSNIMRPHLEKAIKGVEGRVGEMGRMAMKWLVVIICFSITSQPASACNLKTCLKLFNNTDAVTVHCFNENQGYMLTLASLGLGIITMLYLLVKIIIELVNGFVLGRWERWCGDIKTTIMPEIDSMEKDIALSRERLDLGEDAPDETDNSPIPFSNDGIFEI</sequence>
<organism>
    <name type="scientific">Influenza C virus (strain C/Ann Arbor/1/1950)</name>
    <dbReference type="NCBI Taxonomy" id="11553"/>
    <lineage>
        <taxon>Viruses</taxon>
        <taxon>Riboviria</taxon>
        <taxon>Orthornavirae</taxon>
        <taxon>Negarnaviricota</taxon>
        <taxon>Polyploviricotina</taxon>
        <taxon>Insthoviricetes</taxon>
        <taxon>Articulavirales</taxon>
        <taxon>Orthomyxoviridae</taxon>
        <taxon>Gammainfluenzavirus</taxon>
        <taxon>Gammainfluenzavirus influenzae</taxon>
        <taxon>Influenza C virus</taxon>
    </lineage>
</organism>
<dbReference type="EMBL" id="AB126196">
    <property type="protein sequence ID" value="BAD24942.1"/>
    <property type="status" value="ALT_TERM"/>
    <property type="molecule type" value="Viral_cRNA"/>
</dbReference>
<dbReference type="EMBL" id="AB126196">
    <property type="protein sequence ID" value="BAD24943.1"/>
    <property type="status" value="ALT_INIT"/>
    <property type="molecule type" value="Viral_cRNA"/>
</dbReference>
<dbReference type="RefSeq" id="YP_089657.1">
    <molecule id="Q6I7B9-2"/>
    <property type="nucleotide sequence ID" value="NC_006312.1"/>
</dbReference>
<dbReference type="PDB" id="5M1M">
    <property type="method" value="X-ray"/>
    <property type="resolution" value="1.50 A"/>
    <property type="chains" value="A=1-155"/>
</dbReference>
<dbReference type="PDBsum" id="5M1M"/>
<dbReference type="SMR" id="Q6I7B9"/>
<dbReference type="GlyCosmos" id="Q6I7B9">
    <property type="glycosylation" value="1 site, No reported glycans"/>
</dbReference>
<dbReference type="iPTMnet" id="Q6I7B9"/>
<dbReference type="DNASU" id="3077361"/>
<dbReference type="KEGG" id="vg:3077361"/>
<dbReference type="KEGG" id="vg:3077362"/>
<dbReference type="Proteomes" id="UP000008286">
    <property type="component" value="Genome"/>
</dbReference>
<dbReference type="GO" id="GO:0044167">
    <property type="term" value="C:host cell endoplasmic reticulum membrane"/>
    <property type="evidence" value="ECO:0007669"/>
    <property type="project" value="UniProtKB-SubCell"/>
</dbReference>
<dbReference type="GO" id="GO:0020002">
    <property type="term" value="C:host cell plasma membrane"/>
    <property type="evidence" value="ECO:0007669"/>
    <property type="project" value="UniProtKB-SubCell"/>
</dbReference>
<dbReference type="GO" id="GO:0016020">
    <property type="term" value="C:membrane"/>
    <property type="evidence" value="ECO:0007669"/>
    <property type="project" value="UniProtKB-KW"/>
</dbReference>
<dbReference type="GO" id="GO:0019028">
    <property type="term" value="C:viral capsid"/>
    <property type="evidence" value="ECO:0007669"/>
    <property type="project" value="InterPro"/>
</dbReference>
<dbReference type="GO" id="GO:0055036">
    <property type="term" value="C:virion membrane"/>
    <property type="evidence" value="ECO:0007669"/>
    <property type="project" value="UniProtKB-SubCell"/>
</dbReference>
<dbReference type="GO" id="GO:0015267">
    <property type="term" value="F:channel activity"/>
    <property type="evidence" value="ECO:0007669"/>
    <property type="project" value="UniProtKB-KW"/>
</dbReference>
<dbReference type="GO" id="GO:0039660">
    <property type="term" value="F:structural constituent of virion"/>
    <property type="evidence" value="ECO:0007669"/>
    <property type="project" value="UniProtKB-KW"/>
</dbReference>
<dbReference type="GO" id="GO:0034220">
    <property type="term" value="P:monoatomic ion transmembrane transport"/>
    <property type="evidence" value="ECO:0007669"/>
    <property type="project" value="UniProtKB-KW"/>
</dbReference>
<dbReference type="InterPro" id="IPR004271">
    <property type="entry name" value="CM1"/>
</dbReference>
<dbReference type="InterPro" id="IPR004267">
    <property type="entry name" value="CM2"/>
</dbReference>
<dbReference type="Pfam" id="PF03026">
    <property type="entry name" value="CM1"/>
    <property type="match status" value="1"/>
</dbReference>
<dbReference type="Pfam" id="PF03021">
    <property type="entry name" value="CM2"/>
    <property type="match status" value="1"/>
</dbReference>
<name>MAT_INCAA</name>
<reference key="1">
    <citation type="journal article" date="2004" name="J. Gen. Virol.">
        <title>Identification of an amino acid residue on influenza C virus M1 protein responsible for formation of the cord-like structures of the virus.</title>
        <authorList>
            <person name="Muraki Y."/>
            <person name="Washioka H."/>
            <person name="Sugawara K."/>
            <person name="Matsuzaki Y."/>
            <person name="Takashita E."/>
            <person name="Hongo S."/>
        </authorList>
    </citation>
    <scope>NUCLEOTIDE SEQUENCE [GENOMIC RNA]</scope>
</reference>
<reference key="2">
    <citation type="journal article" date="1997" name="Virology">
        <title>The CM2 protein of influenza C virus is an oligomeric integral membrane glycoprotein structurally analogous to influenza A virus M2 and influenza B virus NB proteins.</title>
        <authorList>
            <person name="Pekosz A."/>
            <person name="Lamb R.A."/>
        </authorList>
    </citation>
    <scope>CHARACTERIZATION</scope>
    <scope>SUBCELLULAR LOCATION</scope>
    <scope>GLYCOSYLATION</scope>
    <scope>MUTAGENESIS OF THR-272</scope>
    <scope>TOPOLOGY OF CM2</scope>
</reference>
<reference key="3">
    <citation type="journal article" date="1999" name="J. Virol.">
        <title>Influenza C virus CM2 protein is produced from a 374-amino-acid protein (P42) by signal peptidase cleavage.</title>
        <authorList>
            <person name="Hongo S."/>
            <person name="Sugawara K."/>
            <person name="Muraki Y."/>
            <person name="Matsuzaki Y."/>
            <person name="Takashita E."/>
            <person name="Kitame F."/>
            <person name="Nakamura K."/>
        </authorList>
    </citation>
    <scope>CLEAVAGE BY HOST SIGNAL PEPTIDASE</scope>
</reference>
<reference key="4">
    <citation type="journal article" date="2001" name="J. Gen. Virol.">
        <title>The sites for fatty acylation, phosphorylation and intermolecular disulphide bond formation of influenza C virus CM2 protein.</title>
        <authorList>
            <person name="Li Z.N."/>
            <person name="Hongo S."/>
            <person name="Sugawara K."/>
            <person name="Sugahara K."/>
            <person name="Tsuchiya E."/>
            <person name="Matsuzaki Y."/>
            <person name="Nakamura K."/>
        </authorList>
    </citation>
    <scope>SUBUNIT</scope>
    <scope>PALMITOYLATION AT CYS-324</scope>
    <scope>PHOSPHORYLATION AT SER-337 AND SER-362</scope>
    <scope>MUTAGENESIS OF CYS-260; CYS-265; CYS-279; SER-337 AND SER-367</scope>
</reference>
<reference key="5">
    <citation type="journal article" date="2011" name="J. Virol.">
        <title>Role of the CM2 protein in the influenza C virus replication cycle.</title>
        <authorList>
            <person name="Furukawa T."/>
            <person name="Muraki Y."/>
            <person name="Noda T."/>
            <person name="Takashita E."/>
            <person name="Sho R."/>
            <person name="Sugawara K."/>
            <person name="Matsuzaki Y."/>
            <person name="Shimotai Y."/>
            <person name="Hongo S."/>
        </authorList>
    </citation>
    <scope>FUNCTION</scope>
</reference>
<gene>
    <name type="primary">M</name>
</gene>
<protein>
    <recommendedName>
        <fullName>Polyprotein p42</fullName>
    </recommendedName>
    <component>
        <recommendedName>
            <fullName>Protein M1'</fullName>
        </recommendedName>
        <alternativeName>
            <fullName>CM1'</fullName>
        </alternativeName>
        <alternativeName>
            <fullName>p31</fullName>
        </alternativeName>
    </component>
    <component>
        <recommendedName>
            <fullName>Protein CM2</fullName>
        </recommendedName>
    </component>
</protein>
<organismHost>
    <name type="scientific">Homo sapiens</name>
    <name type="common">Human</name>
    <dbReference type="NCBI Taxonomy" id="9606"/>
</organismHost>
<organismHost>
    <name type="scientific">Sus scrofa</name>
    <name type="common">Pig</name>
    <dbReference type="NCBI Taxonomy" id="9823"/>
</organismHost>
<keyword id="KW-0002">3D-structure</keyword>
<keyword id="KW-0025">Alternative splicing</keyword>
<keyword id="KW-1015">Disulfide bond</keyword>
<keyword id="KW-0325">Glycoprotein</keyword>
<keyword id="KW-1032">Host cell membrane</keyword>
<keyword id="KW-1038">Host endoplasmic reticulum</keyword>
<keyword id="KW-1043">Host membrane</keyword>
<keyword id="KW-0407">Ion channel</keyword>
<keyword id="KW-0406">Ion transport</keyword>
<keyword id="KW-0449">Lipoprotein</keyword>
<keyword id="KW-0472">Membrane</keyword>
<keyword id="KW-0564">Palmitate</keyword>
<keyword id="KW-0597">Phosphoprotein</keyword>
<keyword id="KW-1185">Reference proteome</keyword>
<keyword id="KW-0735">Signal-anchor</keyword>
<keyword id="KW-0812">Transmembrane</keyword>
<keyword id="KW-1133">Transmembrane helix</keyword>
<keyword id="KW-0813">Transport</keyword>
<keyword id="KW-1182">Viral ion channel</keyword>
<keyword id="KW-0468">Viral matrix protein</keyword>
<keyword id="KW-0946">Virion</keyword>
<accession>Q6I7B9</accession>
<accession>Q6I7B8</accession>
<feature type="chain" id="PRO_0000408875" description="Polyprotein p42">
    <location>
        <begin position="1"/>
        <end position="374"/>
    </location>
</feature>
<feature type="chain" id="PRO_0000269455" description="Protein M1'">
    <location>
        <begin position="1"/>
        <end position="259"/>
    </location>
</feature>
<feature type="chain" id="PRO_0000269903" description="Protein CM2">
    <location>
        <begin position="260"/>
        <end position="374"/>
    </location>
</feature>
<feature type="topological domain" description="Cytoplasmic" evidence="7">
    <location>
        <begin position="1"/>
        <end position="238"/>
    </location>
</feature>
<feature type="transmembrane region" description="Helical; Signal-anchor for type II membrane protein" evidence="1">
    <location>
        <begin position="239"/>
        <end position="259"/>
    </location>
</feature>
<feature type="topological domain" description="Extracellular" evidence="7">
    <location>
        <begin position="260"/>
        <end position="288"/>
    </location>
</feature>
<feature type="transmembrane region" description="Helical" evidence="1">
    <location>
        <begin position="289"/>
        <end position="309"/>
    </location>
</feature>
<feature type="topological domain" description="Cytoplasmic" evidence="1">
    <location>
        <begin position="310"/>
        <end position="374"/>
    </location>
</feature>
<feature type="site" description="Cleavage; by host signal peptidase">
    <location>
        <begin position="259"/>
        <end position="260"/>
    </location>
</feature>
<feature type="modified residue" description="Phosphoserine; by host" evidence="2">
    <location>
        <position position="337"/>
    </location>
</feature>
<feature type="modified residue" description="Phosphoserine; by host" evidence="2">
    <location>
        <position position="362"/>
    </location>
</feature>
<feature type="lipid moiety-binding region" description="S-palmitoyl cysteine; by host" evidence="2">
    <location>
        <position position="324"/>
    </location>
</feature>
<feature type="glycosylation site" description="N-linked (GlcNAc...) asparagine; by host" evidence="7">
    <location>
        <position position="270"/>
    </location>
</feature>
<feature type="splice variant" id="VSP_022111" description="In isoform M1." evidence="5">
    <location>
        <begin position="243"/>
        <end position="374"/>
    </location>
</feature>
<feature type="mutagenesis site" description="Complete loss of oligomerization; when associated with A-265 and A279." evidence="2">
    <original>C</original>
    <variation>A</variation>
    <location>
        <position position="260"/>
    </location>
</feature>
<feature type="mutagenesis site" description="Complete loss of oligomerization; when associated with A-260 and A279." evidence="2">
    <original>C</original>
    <variation>A</variation>
    <location>
        <position position="265"/>
    </location>
</feature>
<feature type="mutagenesis site" description="Loss of carbohydrate modification." evidence="4">
    <original>T</original>
    <variation>A</variation>
    <location>
        <position position="272"/>
    </location>
</feature>
<feature type="mutagenesis site" description="Complete loss of oligomerization; when associated with A-260 and A265." evidence="2">
    <original>C</original>
    <variation>A</variation>
    <location>
        <position position="279"/>
    </location>
</feature>
<feature type="mutagenesis site" description="Complete loss of palmitoylation.">
    <original>C</original>
    <variation>A</variation>
    <location>
        <position position="324"/>
    </location>
</feature>
<feature type="mutagenesis site" description="93% loss of phosphorylation. Complete loss of phosphorylation; when associated with A-362." evidence="2">
    <original>S</original>
    <variation>A</variation>
    <location>
        <position position="337"/>
    </location>
</feature>
<feature type="mutagenesis site" description="Complete loss of phosphorylation; when associated with A-337.">
    <original>S</original>
    <variation>A</variation>
    <location>
        <position position="362"/>
    </location>
</feature>
<feature type="mutagenesis site" description="No effet on phosphorylation." evidence="2">
    <original>S</original>
    <variation>A</variation>
    <location>
        <position position="367"/>
    </location>
</feature>
<feature type="helix" evidence="8">
    <location>
        <begin position="3"/>
        <end position="13"/>
    </location>
</feature>
<feature type="turn" evidence="8">
    <location>
        <begin position="14"/>
        <end position="16"/>
    </location>
</feature>
<feature type="helix" evidence="8">
    <location>
        <begin position="19"/>
        <end position="29"/>
    </location>
</feature>
<feature type="helix" evidence="8">
    <location>
        <begin position="33"/>
        <end position="44"/>
    </location>
</feature>
<feature type="helix" evidence="8">
    <location>
        <begin position="52"/>
        <end position="65"/>
    </location>
</feature>
<feature type="helix" evidence="8">
    <location>
        <begin position="73"/>
        <end position="82"/>
    </location>
</feature>
<feature type="turn" evidence="8">
    <location>
        <begin position="83"/>
        <end position="85"/>
    </location>
</feature>
<feature type="helix" evidence="8">
    <location>
        <begin position="88"/>
        <end position="101"/>
    </location>
</feature>
<feature type="helix" evidence="8">
    <location>
        <begin position="104"/>
        <end position="113"/>
    </location>
</feature>
<feature type="helix" evidence="8">
    <location>
        <begin position="118"/>
        <end position="130"/>
    </location>
</feature>
<feature type="helix" evidence="8">
    <location>
        <begin position="132"/>
        <end position="134"/>
    </location>
</feature>
<feature type="helix" evidence="8">
    <location>
        <begin position="137"/>
        <end position="152"/>
    </location>
</feature>
<comment type="function">
    <text evidence="3">Ion channel, which might have a role in genome packaging and uncoating processes.</text>
</comment>
<comment type="subunit">
    <text evidence="6">Homodimer; disulfide-linked. Homotetramer; disulfide-linked.</text>
</comment>
<comment type="subcellular location">
    <molecule>Polyprotein p42</molecule>
    <subcellularLocation>
        <location evidence="5">Host endoplasmic reticulum membrane</location>
        <topology evidence="5">Multi-pass membrane protein</topology>
    </subcellularLocation>
</comment>
<comment type="subcellular location">
    <molecule>Protein M1'</molecule>
    <subcellularLocation>
        <location evidence="5">Virion membrane</location>
        <topology evidence="5">Single-pass type II membrane protein</topology>
    </subcellularLocation>
</comment>
<comment type="subcellular location">
    <molecule>Protein CM2</molecule>
    <subcellularLocation>
        <location evidence="5">Virion membrane</location>
        <topology evidence="5">Single-pass type I membrane protein</topology>
    </subcellularLocation>
    <subcellularLocation>
        <location evidence="5">Host cell membrane</location>
        <topology evidence="5">Single-pass type I membrane protein</topology>
    </subcellularLocation>
</comment>
<comment type="alternative products">
    <event type="alternative splicing"/>
    <isoform>
        <id>Q6I7B9-1</id>
        <name>p42</name>
        <sequence type="displayed"/>
    </isoform>
    <isoform>
        <id>Q6I7B9-2</id>
        <name>M1</name>
        <name>CM1</name>
        <sequence type="described" ref="VSP_022111"/>
    </isoform>
</comment>
<comment type="PTM">
    <text evidence="2">Palmitoylated.</text>
</comment>
<comment type="PTM">
    <text evidence="4">N-glycosylated.</text>
</comment>
<comment type="PTM">
    <text evidence="2">Ser-337 is the major site of phosphorylation, Ser-362 being a minor one.</text>
</comment>
<comment type="miscellaneous">
    <molecule>Isoform p42</molecule>
    <text>Produced by unspliced mRNA.</text>
</comment>
<comment type="similarity">
    <text evidence="5">Belongs to the influenza C protein M1 family.</text>
</comment>
<comment type="sequence caution" evidence="5">
    <conflict type="erroneous gene model prediction">
        <sequence resource="EMBL-CDS" id="BAD24942"/>
    </conflict>
</comment>
<comment type="sequence caution" evidence="5">
    <conflict type="erroneous gene model prediction">
        <sequence resource="EMBL-CDS" id="BAD24943"/>
    </conflict>
</comment>
<evidence type="ECO:0000255" key="1"/>
<evidence type="ECO:0000269" key="2">
    <source>
    </source>
</evidence>
<evidence type="ECO:0000269" key="3">
    <source>
    </source>
</evidence>
<evidence type="ECO:0000269" key="4">
    <source>
    </source>
</evidence>
<evidence type="ECO:0000305" key="5"/>
<evidence type="ECO:0000305" key="6">
    <source>
    </source>
</evidence>
<evidence type="ECO:0000305" key="7">
    <source>
    </source>
</evidence>
<evidence type="ECO:0007829" key="8">
    <source>
        <dbReference type="PDB" id="5M1M"/>
    </source>
</evidence>